<proteinExistence type="inferred from homology"/>
<keyword id="KW-0106">Calcium</keyword>
<keyword id="KW-0119">Carbohydrate metabolism</keyword>
<keyword id="KW-0961">Cell wall biogenesis/degradation</keyword>
<keyword id="KW-0325">Glycoprotein</keyword>
<keyword id="KW-0456">Lyase</keyword>
<keyword id="KW-0479">Metal-binding</keyword>
<keyword id="KW-0624">Polysaccharide degradation</keyword>
<keyword id="KW-1185">Reference proteome</keyword>
<keyword id="KW-0964">Secreted</keyword>
<keyword id="KW-0732">Signal</keyword>
<feature type="signal peptide" evidence="2">
    <location>
        <begin position="1"/>
        <end position="20"/>
    </location>
</feature>
<feature type="chain" id="PRO_0000394570" description="Probable pectate lyase C">
    <location>
        <begin position="21"/>
        <end position="420"/>
    </location>
</feature>
<feature type="domain" description="EF-hand">
    <location>
        <begin position="262"/>
        <end position="297"/>
    </location>
</feature>
<feature type="region of interest" description="Disordered" evidence="4">
    <location>
        <begin position="358"/>
        <end position="396"/>
    </location>
</feature>
<feature type="active site" evidence="2">
    <location>
        <position position="205"/>
    </location>
</feature>
<feature type="binding site" evidence="3">
    <location>
        <position position="275"/>
    </location>
    <ligand>
        <name>Ca(2+)</name>
        <dbReference type="ChEBI" id="CHEBI:29108"/>
    </ligand>
</feature>
<feature type="binding site" evidence="3">
    <location>
        <position position="277"/>
    </location>
    <ligand>
        <name>Ca(2+)</name>
        <dbReference type="ChEBI" id="CHEBI:29108"/>
    </ligand>
</feature>
<feature type="binding site" evidence="3">
    <location>
        <position position="279"/>
    </location>
    <ligand>
        <name>Ca(2+)</name>
        <dbReference type="ChEBI" id="CHEBI:29108"/>
    </ligand>
</feature>
<feature type="binding site" evidence="3">
    <location>
        <position position="281"/>
    </location>
    <ligand>
        <name>Ca(2+)</name>
        <dbReference type="ChEBI" id="CHEBI:29108"/>
    </ligand>
</feature>
<feature type="binding site" evidence="3">
    <location>
        <position position="286"/>
    </location>
    <ligand>
        <name>Ca(2+)</name>
        <dbReference type="ChEBI" id="CHEBI:29108"/>
    </ligand>
</feature>
<feature type="glycosylation site" description="N-linked (GlcNAc...) asparagine" evidence="2">
    <location>
        <position position="49"/>
    </location>
</feature>
<feature type="glycosylation site" description="N-linked (GlcNAc...) asparagine" evidence="2">
    <location>
        <position position="165"/>
    </location>
</feature>
<feature type="glycosylation site" description="N-linked (GlcNAc...) asparagine" evidence="2">
    <location>
        <position position="202"/>
    </location>
</feature>
<feature type="glycosylation site" description="N-linked (GlcNAc...) asparagine" evidence="2">
    <location>
        <position position="394"/>
    </location>
</feature>
<reference key="1">
    <citation type="journal article" date="2005" name="Nature">
        <title>Genomic sequence of the pathogenic and allergenic filamentous fungus Aspergillus fumigatus.</title>
        <authorList>
            <person name="Nierman W.C."/>
            <person name="Pain A."/>
            <person name="Anderson M.J."/>
            <person name="Wortman J.R."/>
            <person name="Kim H.S."/>
            <person name="Arroyo J."/>
            <person name="Berriman M."/>
            <person name="Abe K."/>
            <person name="Archer D.B."/>
            <person name="Bermejo C."/>
            <person name="Bennett J.W."/>
            <person name="Bowyer P."/>
            <person name="Chen D."/>
            <person name="Collins M."/>
            <person name="Coulsen R."/>
            <person name="Davies R."/>
            <person name="Dyer P.S."/>
            <person name="Farman M.L."/>
            <person name="Fedorova N."/>
            <person name="Fedorova N.D."/>
            <person name="Feldblyum T.V."/>
            <person name="Fischer R."/>
            <person name="Fosker N."/>
            <person name="Fraser A."/>
            <person name="Garcia J.L."/>
            <person name="Garcia M.J."/>
            <person name="Goble A."/>
            <person name="Goldman G.H."/>
            <person name="Gomi K."/>
            <person name="Griffith-Jones S."/>
            <person name="Gwilliam R."/>
            <person name="Haas B.J."/>
            <person name="Haas H."/>
            <person name="Harris D.E."/>
            <person name="Horiuchi H."/>
            <person name="Huang J."/>
            <person name="Humphray S."/>
            <person name="Jimenez J."/>
            <person name="Keller N."/>
            <person name="Khouri H."/>
            <person name="Kitamoto K."/>
            <person name="Kobayashi T."/>
            <person name="Konzack S."/>
            <person name="Kulkarni R."/>
            <person name="Kumagai T."/>
            <person name="Lafton A."/>
            <person name="Latge J.-P."/>
            <person name="Li W."/>
            <person name="Lord A."/>
            <person name="Lu C."/>
            <person name="Majoros W.H."/>
            <person name="May G.S."/>
            <person name="Miller B.L."/>
            <person name="Mohamoud Y."/>
            <person name="Molina M."/>
            <person name="Monod M."/>
            <person name="Mouyna I."/>
            <person name="Mulligan S."/>
            <person name="Murphy L.D."/>
            <person name="O'Neil S."/>
            <person name="Paulsen I."/>
            <person name="Penalva M.A."/>
            <person name="Pertea M."/>
            <person name="Price C."/>
            <person name="Pritchard B.L."/>
            <person name="Quail M.A."/>
            <person name="Rabbinowitsch E."/>
            <person name="Rawlins N."/>
            <person name="Rajandream M.A."/>
            <person name="Reichard U."/>
            <person name="Renauld H."/>
            <person name="Robson G.D."/>
            <person name="Rodriguez de Cordoba S."/>
            <person name="Rodriguez-Pena J.M."/>
            <person name="Ronning C.M."/>
            <person name="Rutter S."/>
            <person name="Salzberg S.L."/>
            <person name="Sanchez M."/>
            <person name="Sanchez-Ferrero J.C."/>
            <person name="Saunders D."/>
            <person name="Seeger K."/>
            <person name="Squares R."/>
            <person name="Squares S."/>
            <person name="Takeuchi M."/>
            <person name="Tekaia F."/>
            <person name="Turner G."/>
            <person name="Vazquez de Aldana C.R."/>
            <person name="Weidman J."/>
            <person name="White O."/>
            <person name="Woodward J.R."/>
            <person name="Yu J.-H."/>
            <person name="Fraser C.M."/>
            <person name="Galagan J.E."/>
            <person name="Asai K."/>
            <person name="Machida M."/>
            <person name="Hall N."/>
            <person name="Barrell B.G."/>
            <person name="Denning D.W."/>
        </authorList>
    </citation>
    <scope>NUCLEOTIDE SEQUENCE [LARGE SCALE GENOMIC DNA]</scope>
    <source>
        <strain>ATCC MYA-4609 / CBS 101355 / FGSC A1100 / Af293</strain>
    </source>
</reference>
<accession>Q4WL88</accession>
<evidence type="ECO:0000250" key="1"/>
<evidence type="ECO:0000255" key="2"/>
<evidence type="ECO:0000255" key="3">
    <source>
        <dbReference type="PROSITE-ProRule" id="PRU10142"/>
    </source>
</evidence>
<evidence type="ECO:0000256" key="4">
    <source>
        <dbReference type="SAM" id="MobiDB-lite"/>
    </source>
</evidence>
<evidence type="ECO:0000305" key="5"/>
<organism>
    <name type="scientific">Aspergillus fumigatus (strain ATCC MYA-4609 / CBS 101355 / FGSC A1100 / Af293)</name>
    <name type="common">Neosartorya fumigata</name>
    <dbReference type="NCBI Taxonomy" id="330879"/>
    <lineage>
        <taxon>Eukaryota</taxon>
        <taxon>Fungi</taxon>
        <taxon>Dikarya</taxon>
        <taxon>Ascomycota</taxon>
        <taxon>Pezizomycotina</taxon>
        <taxon>Eurotiomycetes</taxon>
        <taxon>Eurotiomycetidae</taxon>
        <taxon>Eurotiales</taxon>
        <taxon>Aspergillaceae</taxon>
        <taxon>Aspergillus</taxon>
        <taxon>Aspergillus subgen. Fumigati</taxon>
    </lineage>
</organism>
<dbReference type="EC" id="4.2.2.2"/>
<dbReference type="EMBL" id="AAHF01000006">
    <property type="protein sequence ID" value="EAL89276.1"/>
    <property type="molecule type" value="Genomic_DNA"/>
</dbReference>
<dbReference type="RefSeq" id="XP_751314.1">
    <property type="nucleotide sequence ID" value="XM_746221.1"/>
</dbReference>
<dbReference type="SMR" id="Q4WL88"/>
<dbReference type="GlyCosmos" id="Q4WL88">
    <property type="glycosylation" value="4 sites, No reported glycans"/>
</dbReference>
<dbReference type="EnsemblFungi" id="EAL89276">
    <property type="protein sequence ID" value="EAL89276"/>
    <property type="gene ID" value="AFUA_6G14400"/>
</dbReference>
<dbReference type="GeneID" id="3508631"/>
<dbReference type="KEGG" id="afm:AFUA_6G14400"/>
<dbReference type="VEuPathDB" id="FungiDB:Afu6g14400"/>
<dbReference type="eggNOG" id="ENOG502QW7I">
    <property type="taxonomic scope" value="Eukaryota"/>
</dbReference>
<dbReference type="HOGENOM" id="CLU_016764_1_1_1"/>
<dbReference type="InParanoid" id="Q4WL88"/>
<dbReference type="OMA" id="GIHSMGT"/>
<dbReference type="OrthoDB" id="302705at2759"/>
<dbReference type="Proteomes" id="UP000002530">
    <property type="component" value="Chromosome 6"/>
</dbReference>
<dbReference type="GO" id="GO:0005576">
    <property type="term" value="C:extracellular region"/>
    <property type="evidence" value="ECO:0007669"/>
    <property type="project" value="UniProtKB-SubCell"/>
</dbReference>
<dbReference type="GO" id="GO:0046872">
    <property type="term" value="F:metal ion binding"/>
    <property type="evidence" value="ECO:0007669"/>
    <property type="project" value="UniProtKB-KW"/>
</dbReference>
<dbReference type="GO" id="GO:0030570">
    <property type="term" value="F:pectate lyase activity"/>
    <property type="evidence" value="ECO:0007669"/>
    <property type="project" value="UniProtKB-EC"/>
</dbReference>
<dbReference type="GO" id="GO:0071555">
    <property type="term" value="P:cell wall organization"/>
    <property type="evidence" value="ECO:0007669"/>
    <property type="project" value="UniProtKB-KW"/>
</dbReference>
<dbReference type="GO" id="GO:0000272">
    <property type="term" value="P:polysaccharide catabolic process"/>
    <property type="evidence" value="ECO:0007669"/>
    <property type="project" value="UniProtKB-KW"/>
</dbReference>
<dbReference type="Gene3D" id="2.160.20.10">
    <property type="entry name" value="Single-stranded right-handed beta-helix, Pectin lyase-like"/>
    <property type="match status" value="1"/>
</dbReference>
<dbReference type="InterPro" id="IPR018247">
    <property type="entry name" value="EF_Hand_1_Ca_BS"/>
</dbReference>
<dbReference type="InterPro" id="IPR012334">
    <property type="entry name" value="Pectin_lyas_fold"/>
</dbReference>
<dbReference type="InterPro" id="IPR011050">
    <property type="entry name" value="Pectin_lyase_fold/virulence"/>
</dbReference>
<dbReference type="InterPro" id="IPR052063">
    <property type="entry name" value="Polysaccharide_Lyase_1"/>
</dbReference>
<dbReference type="PANTHER" id="PTHR42970">
    <property type="entry name" value="PECTATE LYASE C-RELATED"/>
    <property type="match status" value="1"/>
</dbReference>
<dbReference type="PANTHER" id="PTHR42970:SF1">
    <property type="entry name" value="PECTATE LYASE C-RELATED"/>
    <property type="match status" value="1"/>
</dbReference>
<dbReference type="Pfam" id="PF18884">
    <property type="entry name" value="TSP3_bac"/>
    <property type="match status" value="1"/>
</dbReference>
<dbReference type="SUPFAM" id="SSF51126">
    <property type="entry name" value="Pectin lyase-like"/>
    <property type="match status" value="1"/>
</dbReference>
<dbReference type="PROSITE" id="PS00018">
    <property type="entry name" value="EF_HAND_1"/>
    <property type="match status" value="1"/>
</dbReference>
<name>PLYC_ASPFU</name>
<sequence>MKLSEPLLVSLAAFSQAVTALVAFPGAEGFGANAIGGRNGQVYVVTNLNDSGTGSLRDAVSATDRIVVFAVGGVIKISDRIVVSKRVTILGQTAPGDGITVYGNGWSFSNADDAIVRYIRIRMGKGGSSGKDALGIAEGNRMIFDHVSVSWGRDETFSINGDASNITVQNSIIAQGLETHSCGGLMQTDGGVSLFRNLYIDNKTRNPKVKGVNEFTNNVVYNWGGGGGYIAGDSAGQSYANIIGNYFISGPSTSVTAFTRGNANFHGYVQNNYYDPDKDGQLDGFELGVSSSNYGGMAIMSSKYNYPAVAYTMSPAEAVTYVTKYAGASKVRDSVDTQLIAQVQSWGTEGGLISDEATMGGPGTLNGGTPAKDTDGDGIPDEAEKQLGTDPNTNDSMKLHSSGYTYLEVWANSLVPSTYH</sequence>
<comment type="function">
    <text evidence="1">Pectinolytic enzyme consist of four classes of enzymes: pectin lyase, polygalacturonase, pectin methylesterase and rhamnogalacturonase. Among pectinolytic enzymes, pectin lyase is the most important in depolymerization of pectin, since it cleaves internal glycosidic bonds of highly methylated pectins. Favors pectate, the anion, over pectin, the methyl ester (By similarity).</text>
</comment>
<comment type="catalytic activity">
    <reaction>
        <text>Eliminative cleavage of (1-&gt;4)-alpha-D-galacturonan to give oligosaccharides with 4-deoxy-alpha-D-galact-4-enuronosyl groups at their non-reducing ends.</text>
        <dbReference type="EC" id="4.2.2.2"/>
    </reaction>
</comment>
<comment type="cofactor">
    <cofactor evidence="1">
        <name>Ca(2+)</name>
        <dbReference type="ChEBI" id="CHEBI:29108"/>
    </cofactor>
    <text evidence="1">Binds 1 Ca(2+) ion per subunit.</text>
</comment>
<comment type="subcellular location">
    <subcellularLocation>
        <location evidence="1">Secreted</location>
    </subcellularLocation>
</comment>
<comment type="similarity">
    <text evidence="5">Belongs to the polysaccharide lyase 1 family.</text>
</comment>
<gene>
    <name type="primary">plyC</name>
    <name type="ORF">AFUA_6G14400</name>
</gene>
<protein>
    <recommendedName>
        <fullName>Probable pectate lyase C</fullName>
        <ecNumber>4.2.2.2</ecNumber>
    </recommendedName>
</protein>